<accession>P00462</accession>
<evidence type="ECO:0000250" key="1"/>
<evidence type="ECO:0000255" key="2"/>
<evidence type="ECO:0000305" key="3"/>
<protein>
    <recommendedName>
        <fullName>Nitrogenase iron protein</fullName>
        <ecNumber>1.18.6.1</ecNumber>
    </recommendedName>
    <alternativeName>
        <fullName>Nitrogenase Fe protein</fullName>
    </alternativeName>
    <alternativeName>
        <fullName>Nitrogenase component II</fullName>
    </alternativeName>
    <alternativeName>
        <fullName>Nitrogenase reductase</fullName>
    </alternativeName>
</protein>
<name>NIFH_RHIET</name>
<keyword id="KW-0004">4Fe-4S</keyword>
<keyword id="KW-0013">ADP-ribosylation</keyword>
<keyword id="KW-0067">ATP-binding</keyword>
<keyword id="KW-0408">Iron</keyword>
<keyword id="KW-0411">Iron-sulfur</keyword>
<keyword id="KW-0479">Metal-binding</keyword>
<keyword id="KW-0535">Nitrogen fixation</keyword>
<keyword id="KW-0547">Nucleotide-binding</keyword>
<keyword id="KW-0560">Oxidoreductase</keyword>
<keyword id="KW-0614">Plasmid</keyword>
<gene>
    <name type="primary">nifH</name>
</gene>
<dbReference type="EC" id="1.18.6.1"/>
<dbReference type="EMBL" id="M10587">
    <property type="protein sequence ID" value="AAA26319.1"/>
    <property type="molecule type" value="Genomic_DNA"/>
</dbReference>
<dbReference type="EMBL" id="M15941">
    <property type="protein sequence ID" value="AAA26320.1"/>
    <property type="molecule type" value="Genomic_DNA"/>
</dbReference>
<dbReference type="EMBL" id="M15942">
    <property type="protein sequence ID" value="AAA26321.1"/>
    <property type="molecule type" value="Genomic_DNA"/>
</dbReference>
<dbReference type="PIR" id="A00539">
    <property type="entry name" value="NIZRF"/>
</dbReference>
<dbReference type="RefSeq" id="WP_004675840.1">
    <property type="nucleotide sequence ID" value="NZ_JACJNQ010000054.1"/>
</dbReference>
<dbReference type="SMR" id="P00462"/>
<dbReference type="GeneID" id="45960649"/>
<dbReference type="PATRIC" id="fig|29449.15.peg.5163"/>
<dbReference type="OMA" id="YGDVKCV"/>
<dbReference type="GO" id="GO:0051539">
    <property type="term" value="F:4 iron, 4 sulfur cluster binding"/>
    <property type="evidence" value="ECO:0007669"/>
    <property type="project" value="UniProtKB-KW"/>
</dbReference>
<dbReference type="GO" id="GO:0005524">
    <property type="term" value="F:ATP binding"/>
    <property type="evidence" value="ECO:0007669"/>
    <property type="project" value="UniProtKB-UniRule"/>
</dbReference>
<dbReference type="GO" id="GO:0046872">
    <property type="term" value="F:metal ion binding"/>
    <property type="evidence" value="ECO:0007669"/>
    <property type="project" value="UniProtKB-KW"/>
</dbReference>
<dbReference type="GO" id="GO:0016163">
    <property type="term" value="F:nitrogenase activity"/>
    <property type="evidence" value="ECO:0007669"/>
    <property type="project" value="UniProtKB-UniRule"/>
</dbReference>
<dbReference type="GO" id="GO:0009399">
    <property type="term" value="P:nitrogen fixation"/>
    <property type="evidence" value="ECO:0007669"/>
    <property type="project" value="UniProtKB-UniRule"/>
</dbReference>
<dbReference type="CDD" id="cd02040">
    <property type="entry name" value="NifH"/>
    <property type="match status" value="1"/>
</dbReference>
<dbReference type="FunFam" id="3.40.50.300:FF:001379">
    <property type="entry name" value="Nitrogenase iron protein 1"/>
    <property type="match status" value="1"/>
</dbReference>
<dbReference type="Gene3D" id="3.40.50.300">
    <property type="entry name" value="P-loop containing nucleotide triphosphate hydrolases"/>
    <property type="match status" value="1"/>
</dbReference>
<dbReference type="HAMAP" id="MF_00533">
    <property type="entry name" value="NifH"/>
    <property type="match status" value="1"/>
</dbReference>
<dbReference type="InterPro" id="IPR030655">
    <property type="entry name" value="NifH/chlL_CS"/>
</dbReference>
<dbReference type="InterPro" id="IPR000392">
    <property type="entry name" value="NifH/frxC"/>
</dbReference>
<dbReference type="InterPro" id="IPR005977">
    <property type="entry name" value="Nitrogenase_Fe_NifH"/>
</dbReference>
<dbReference type="InterPro" id="IPR027417">
    <property type="entry name" value="P-loop_NTPase"/>
</dbReference>
<dbReference type="NCBIfam" id="TIGR01287">
    <property type="entry name" value="nifH"/>
    <property type="match status" value="1"/>
</dbReference>
<dbReference type="PANTHER" id="PTHR42864">
    <property type="entry name" value="LIGHT-INDEPENDENT PROTOCHLOROPHYLLIDE REDUCTASE IRON-SULFUR ATP-BINDING PROTEIN"/>
    <property type="match status" value="1"/>
</dbReference>
<dbReference type="PANTHER" id="PTHR42864:SF2">
    <property type="entry name" value="LIGHT-INDEPENDENT PROTOCHLOROPHYLLIDE REDUCTASE IRON-SULFUR ATP-BINDING PROTEIN"/>
    <property type="match status" value="1"/>
</dbReference>
<dbReference type="Pfam" id="PF00142">
    <property type="entry name" value="Fer4_NifH"/>
    <property type="match status" value="1"/>
</dbReference>
<dbReference type="PIRSF" id="PIRSF000363">
    <property type="entry name" value="Nitrogenase_iron"/>
    <property type="match status" value="1"/>
</dbReference>
<dbReference type="PRINTS" id="PR00091">
    <property type="entry name" value="NITROGNASEII"/>
</dbReference>
<dbReference type="SUPFAM" id="SSF52540">
    <property type="entry name" value="P-loop containing nucleoside triphosphate hydrolases"/>
    <property type="match status" value="1"/>
</dbReference>
<dbReference type="PROSITE" id="PS00746">
    <property type="entry name" value="NIFH_FRXC_1"/>
    <property type="match status" value="1"/>
</dbReference>
<dbReference type="PROSITE" id="PS00692">
    <property type="entry name" value="NIFH_FRXC_2"/>
    <property type="match status" value="1"/>
</dbReference>
<dbReference type="PROSITE" id="PS51026">
    <property type="entry name" value="NIFH_FRXC_3"/>
    <property type="match status" value="1"/>
</dbReference>
<reference key="1">
    <citation type="journal article" date="1985" name="Proc. Natl. Acad. Sci. U.S.A.">
        <title>Nitrogenase reductase: a functional multigene family in Rhizobium phaseoli.</title>
        <authorList>
            <person name="Quinto C."/>
            <person name="de la Vega H."/>
            <person name="Flores M."/>
            <person name="Leemans J."/>
            <person name="Cevallos M.A."/>
            <person name="Pardo M.A."/>
            <person name="Azpiroz R."/>
            <person name="de Lourdes Girard M."/>
            <person name="Calva E."/>
            <person name="Palacios R."/>
        </authorList>
    </citation>
    <scope>NUCLEOTIDE SEQUENCE [GENOMIC DNA]</scope>
</reference>
<proteinExistence type="inferred from homology"/>
<feature type="chain" id="PRO_0000139521" description="Nitrogenase iron protein">
    <location>
        <begin position="1"/>
        <end position="297"/>
    </location>
</feature>
<feature type="binding site" evidence="2">
    <location>
        <begin position="11"/>
        <end position="18"/>
    </location>
    <ligand>
        <name>ATP</name>
        <dbReference type="ChEBI" id="CHEBI:30616"/>
    </ligand>
</feature>
<feature type="binding site" evidence="1">
    <location>
        <position position="99"/>
    </location>
    <ligand>
        <name>[4Fe-4S] cluster</name>
        <dbReference type="ChEBI" id="CHEBI:49883"/>
        <note>ligand shared between dimeric partners</note>
    </ligand>
</feature>
<feature type="binding site" evidence="1">
    <location>
        <position position="133"/>
    </location>
    <ligand>
        <name>[4Fe-4S] cluster</name>
        <dbReference type="ChEBI" id="CHEBI:49883"/>
        <note>ligand shared between dimeric partners</note>
    </ligand>
</feature>
<feature type="modified residue" description="ADP-ribosylarginine; by dinitrogenase reductase ADP-ribosyltransferase" evidence="1">
    <location>
        <position position="102"/>
    </location>
</feature>
<geneLocation type="plasmid">
    <name>sym p42d</name>
</geneLocation>
<comment type="function">
    <text evidence="1">The key enzymatic reactions in nitrogen fixation are catalyzed by the nitrogenase complex, which has 2 components: the iron protein and the molybdenum-iron protein.</text>
</comment>
<comment type="catalytic activity">
    <reaction>
        <text>N2 + 8 reduced [2Fe-2S]-[ferredoxin] + 16 ATP + 16 H2O = H2 + 8 oxidized [2Fe-2S]-[ferredoxin] + 2 NH4(+) + 16 ADP + 16 phosphate + 6 H(+)</text>
        <dbReference type="Rhea" id="RHEA:21448"/>
        <dbReference type="Rhea" id="RHEA-COMP:10000"/>
        <dbReference type="Rhea" id="RHEA-COMP:10001"/>
        <dbReference type="ChEBI" id="CHEBI:15377"/>
        <dbReference type="ChEBI" id="CHEBI:15378"/>
        <dbReference type="ChEBI" id="CHEBI:17997"/>
        <dbReference type="ChEBI" id="CHEBI:18276"/>
        <dbReference type="ChEBI" id="CHEBI:28938"/>
        <dbReference type="ChEBI" id="CHEBI:30616"/>
        <dbReference type="ChEBI" id="CHEBI:33737"/>
        <dbReference type="ChEBI" id="CHEBI:33738"/>
        <dbReference type="ChEBI" id="CHEBI:43474"/>
        <dbReference type="ChEBI" id="CHEBI:456216"/>
        <dbReference type="EC" id="1.18.6.1"/>
    </reaction>
</comment>
<comment type="cofactor">
    <cofactor evidence="1">
        <name>[4Fe-4S] cluster</name>
        <dbReference type="ChEBI" id="CHEBI:49883"/>
    </cofactor>
    <text evidence="1">Binds 1 [4Fe-4S] cluster per dimer.</text>
</comment>
<comment type="subunit">
    <text evidence="1">Homodimer.</text>
</comment>
<comment type="PTM">
    <text evidence="1">The reversible ADP-ribosylation of Arg-102 inactivates the nitrogenase reductase and regulates nitrogenase activity.</text>
</comment>
<comment type="similarity">
    <text evidence="3">Belongs to the NifH/BchL/ChlL family.</text>
</comment>
<comment type="caution">
    <text evidence="3">Plasmid p42d was originally thought to originate from Rhizobium leguminosarum (biovar phaseoli).</text>
</comment>
<sequence length="297" mass="31966">MSDLRQIAFYGKGGIGKSTTSQNTLAALVDLGQKILIVGCDPKADSTRLILNAKAQDTVLHLAAQEGSVEDLELEDVLKAGYKGIKCVESGGPEPGVGCAGRGVITSINFLEENGAYDDVDYVSYDVLGDVVCGGFAMPIRENKAQEIYIVMSGEMMALYAANNIAKGILKYAHSGGVRLGGLICNERQTDRELDLSEALAARLNSKLIHFVPRDNIVQHAELRKMTVIQYAPDSKQAGEYRALAEKIHANSGQGTIPTPITMEELEDMLLDFGIMKSDEQMLAELQAKESAVVAAQ</sequence>
<organism>
    <name type="scientific">Rhizobium etli</name>
    <dbReference type="NCBI Taxonomy" id="29449"/>
    <lineage>
        <taxon>Bacteria</taxon>
        <taxon>Pseudomonadati</taxon>
        <taxon>Pseudomonadota</taxon>
        <taxon>Alphaproteobacteria</taxon>
        <taxon>Hyphomicrobiales</taxon>
        <taxon>Rhizobiaceae</taxon>
        <taxon>Rhizobium/Agrobacterium group</taxon>
        <taxon>Rhizobium</taxon>
    </lineage>
</organism>